<proteinExistence type="inferred from homology"/>
<protein>
    <recommendedName>
        <fullName evidence="1">tRNA dimethylallyltransferase</fullName>
        <ecNumber evidence="1">2.5.1.75</ecNumber>
    </recommendedName>
    <alternativeName>
        <fullName evidence="1">Dimethylallyl diphosphate:tRNA dimethylallyltransferase</fullName>
        <shortName evidence="1">DMAPP:tRNA dimethylallyltransferase</shortName>
        <shortName evidence="1">DMATase</shortName>
    </alternativeName>
    <alternativeName>
        <fullName evidence="1">Isopentenyl-diphosphate:tRNA isopentenyltransferase</fullName>
        <shortName evidence="1">IPP transferase</shortName>
        <shortName evidence="1">IPPT</shortName>
        <shortName evidence="1">IPTase</shortName>
    </alternativeName>
</protein>
<evidence type="ECO:0000255" key="1">
    <source>
        <dbReference type="HAMAP-Rule" id="MF_00185"/>
    </source>
</evidence>
<sequence length="309" mass="35687">MKDILIIAGPTAVGKTDISIKIAQKMNGEIISADSMQIYKYMDIGSAKVTKEEMKGIKHHLIDVVDPSEEFSVASFKKMAQNAIDDITSRKKYPIIVGGTGLYINSLICNYDFTGAYKDEAYRESLQAIAKDKGKEYLHEKLKNIDIDSYKKLYPNDLKRVIRALEVYKITGKTISELNSNVDLYDIPYNIHYFILNMDRQKLYERINLRVDIMLRNGLVDEVIKLRDMGYNSNMQSMKGIGYKEILSYLEGCITLEEAVELIKKGSRHYAKRQLTWFRKDERAVWINKDIYKNDDDIVFKILSSIEEI</sequence>
<comment type="function">
    <text evidence="1">Catalyzes the transfer of a dimethylallyl group onto the adenine at position 37 in tRNAs that read codons beginning with uridine, leading to the formation of N6-(dimethylallyl)adenosine (i(6)A).</text>
</comment>
<comment type="catalytic activity">
    <reaction evidence="1">
        <text>adenosine(37) in tRNA + dimethylallyl diphosphate = N(6)-dimethylallyladenosine(37) in tRNA + diphosphate</text>
        <dbReference type="Rhea" id="RHEA:26482"/>
        <dbReference type="Rhea" id="RHEA-COMP:10162"/>
        <dbReference type="Rhea" id="RHEA-COMP:10375"/>
        <dbReference type="ChEBI" id="CHEBI:33019"/>
        <dbReference type="ChEBI" id="CHEBI:57623"/>
        <dbReference type="ChEBI" id="CHEBI:74411"/>
        <dbReference type="ChEBI" id="CHEBI:74415"/>
        <dbReference type="EC" id="2.5.1.75"/>
    </reaction>
</comment>
<comment type="cofactor">
    <cofactor evidence="1">
        <name>Mg(2+)</name>
        <dbReference type="ChEBI" id="CHEBI:18420"/>
    </cofactor>
</comment>
<comment type="subunit">
    <text evidence="1">Monomer.</text>
</comment>
<comment type="similarity">
    <text evidence="1">Belongs to the IPP transferase family.</text>
</comment>
<dbReference type="EC" id="2.5.1.75" evidence="1"/>
<dbReference type="EMBL" id="AE001437">
    <property type="protein sequence ID" value="AAK79799.1"/>
    <property type="molecule type" value="Genomic_DNA"/>
</dbReference>
<dbReference type="PIR" id="D97126">
    <property type="entry name" value="D97126"/>
</dbReference>
<dbReference type="RefSeq" id="NP_348459.1">
    <property type="nucleotide sequence ID" value="NC_003030.1"/>
</dbReference>
<dbReference type="RefSeq" id="WP_010965140.1">
    <property type="nucleotide sequence ID" value="NC_003030.1"/>
</dbReference>
<dbReference type="SMR" id="Q97I21"/>
<dbReference type="STRING" id="272562.CA_C1835"/>
<dbReference type="GeneID" id="44998328"/>
<dbReference type="KEGG" id="cac:CA_C1835"/>
<dbReference type="PATRIC" id="fig|272562.8.peg.2040"/>
<dbReference type="eggNOG" id="COG0324">
    <property type="taxonomic scope" value="Bacteria"/>
</dbReference>
<dbReference type="HOGENOM" id="CLU_032616_0_1_9"/>
<dbReference type="OrthoDB" id="9776390at2"/>
<dbReference type="Proteomes" id="UP000000814">
    <property type="component" value="Chromosome"/>
</dbReference>
<dbReference type="GO" id="GO:0005524">
    <property type="term" value="F:ATP binding"/>
    <property type="evidence" value="ECO:0007669"/>
    <property type="project" value="UniProtKB-UniRule"/>
</dbReference>
<dbReference type="GO" id="GO:0052381">
    <property type="term" value="F:tRNA dimethylallyltransferase activity"/>
    <property type="evidence" value="ECO:0007669"/>
    <property type="project" value="UniProtKB-UniRule"/>
</dbReference>
<dbReference type="GO" id="GO:0006400">
    <property type="term" value="P:tRNA modification"/>
    <property type="evidence" value="ECO:0007669"/>
    <property type="project" value="TreeGrafter"/>
</dbReference>
<dbReference type="FunFam" id="1.10.20.140:FF:000001">
    <property type="entry name" value="tRNA dimethylallyltransferase"/>
    <property type="match status" value="1"/>
</dbReference>
<dbReference type="Gene3D" id="1.10.20.140">
    <property type="match status" value="1"/>
</dbReference>
<dbReference type="Gene3D" id="3.40.50.300">
    <property type="entry name" value="P-loop containing nucleotide triphosphate hydrolases"/>
    <property type="match status" value="1"/>
</dbReference>
<dbReference type="HAMAP" id="MF_00185">
    <property type="entry name" value="IPP_trans"/>
    <property type="match status" value="1"/>
</dbReference>
<dbReference type="InterPro" id="IPR039657">
    <property type="entry name" value="Dimethylallyltransferase"/>
</dbReference>
<dbReference type="InterPro" id="IPR018022">
    <property type="entry name" value="IPT"/>
</dbReference>
<dbReference type="InterPro" id="IPR027417">
    <property type="entry name" value="P-loop_NTPase"/>
</dbReference>
<dbReference type="NCBIfam" id="TIGR00174">
    <property type="entry name" value="miaA"/>
    <property type="match status" value="1"/>
</dbReference>
<dbReference type="PANTHER" id="PTHR11088">
    <property type="entry name" value="TRNA DIMETHYLALLYLTRANSFERASE"/>
    <property type="match status" value="1"/>
</dbReference>
<dbReference type="PANTHER" id="PTHR11088:SF60">
    <property type="entry name" value="TRNA DIMETHYLALLYLTRANSFERASE"/>
    <property type="match status" value="1"/>
</dbReference>
<dbReference type="Pfam" id="PF01715">
    <property type="entry name" value="IPPT"/>
    <property type="match status" value="1"/>
</dbReference>
<dbReference type="SUPFAM" id="SSF52540">
    <property type="entry name" value="P-loop containing nucleoside triphosphate hydrolases"/>
    <property type="match status" value="2"/>
</dbReference>
<name>MIAA_CLOAB</name>
<accession>Q97I21</accession>
<reference key="1">
    <citation type="journal article" date="2001" name="J. Bacteriol.">
        <title>Genome sequence and comparative analysis of the solvent-producing bacterium Clostridium acetobutylicum.</title>
        <authorList>
            <person name="Noelling J."/>
            <person name="Breton G."/>
            <person name="Omelchenko M.V."/>
            <person name="Makarova K.S."/>
            <person name="Zeng Q."/>
            <person name="Gibson R."/>
            <person name="Lee H.M."/>
            <person name="Dubois J."/>
            <person name="Qiu D."/>
            <person name="Hitti J."/>
            <person name="Wolf Y.I."/>
            <person name="Tatusov R.L."/>
            <person name="Sabathe F."/>
            <person name="Doucette-Stamm L.A."/>
            <person name="Soucaille P."/>
            <person name="Daly M.J."/>
            <person name="Bennett G.N."/>
            <person name="Koonin E.V."/>
            <person name="Smith D.R."/>
        </authorList>
    </citation>
    <scope>NUCLEOTIDE SEQUENCE [LARGE SCALE GENOMIC DNA]</scope>
    <source>
        <strain>ATCC 824 / DSM 792 / JCM 1419 / IAM 19013 / LMG 5710 / NBRC 13948 / NRRL B-527 / VKM B-1787 / 2291 / W</strain>
    </source>
</reference>
<gene>
    <name evidence="1" type="primary">miaA</name>
    <name type="ordered locus">CA_C1835</name>
</gene>
<keyword id="KW-0067">ATP-binding</keyword>
<keyword id="KW-0460">Magnesium</keyword>
<keyword id="KW-0547">Nucleotide-binding</keyword>
<keyword id="KW-1185">Reference proteome</keyword>
<keyword id="KW-0808">Transferase</keyword>
<keyword id="KW-0819">tRNA processing</keyword>
<feature type="chain" id="PRO_0000163903" description="tRNA dimethylallyltransferase">
    <location>
        <begin position="1"/>
        <end position="309"/>
    </location>
</feature>
<feature type="region of interest" description="Interaction with substrate tRNA" evidence="1">
    <location>
        <begin position="34"/>
        <end position="37"/>
    </location>
</feature>
<feature type="binding site" evidence="1">
    <location>
        <begin position="9"/>
        <end position="16"/>
    </location>
    <ligand>
        <name>ATP</name>
        <dbReference type="ChEBI" id="CHEBI:30616"/>
    </ligand>
</feature>
<feature type="binding site" evidence="1">
    <location>
        <begin position="11"/>
        <end position="16"/>
    </location>
    <ligand>
        <name>substrate</name>
    </ligand>
</feature>
<feature type="site" description="Interaction with substrate tRNA" evidence="1">
    <location>
        <position position="100"/>
    </location>
</feature>
<feature type="site" description="Interaction with substrate tRNA" evidence="1">
    <location>
        <position position="123"/>
    </location>
</feature>
<organism>
    <name type="scientific">Clostridium acetobutylicum (strain ATCC 824 / DSM 792 / JCM 1419 / IAM 19013 / LMG 5710 / NBRC 13948 / NRRL B-527 / VKM B-1787 / 2291 / W)</name>
    <dbReference type="NCBI Taxonomy" id="272562"/>
    <lineage>
        <taxon>Bacteria</taxon>
        <taxon>Bacillati</taxon>
        <taxon>Bacillota</taxon>
        <taxon>Clostridia</taxon>
        <taxon>Eubacteriales</taxon>
        <taxon>Clostridiaceae</taxon>
        <taxon>Clostridium</taxon>
    </lineage>
</organism>